<keyword id="KW-0119">Carbohydrate metabolism</keyword>
<keyword id="KW-1003">Cell membrane</keyword>
<keyword id="KW-0967">Endosome</keyword>
<keyword id="KW-0326">Glycosidase</keyword>
<keyword id="KW-0378">Hydrolase</keyword>
<keyword id="KW-0442">Lipid degradation</keyword>
<keyword id="KW-0443">Lipid metabolism</keyword>
<keyword id="KW-0449">Lipoprotein</keyword>
<keyword id="KW-0458">Lysosome</keyword>
<keyword id="KW-0472">Membrane</keyword>
<keyword id="KW-0597">Phosphoprotein</keyword>
<keyword id="KW-1185">Reference proteome</keyword>
<keyword id="KW-0677">Repeat</keyword>
<feature type="chain" id="PRO_0000208904" description="Sialidase-3">
    <location>
        <begin position="1"/>
        <end position="418"/>
    </location>
</feature>
<feature type="repeat" description="BNR 1">
    <location>
        <begin position="129"/>
        <end position="140"/>
    </location>
</feature>
<feature type="repeat" description="BNR 2">
    <location>
        <begin position="203"/>
        <end position="214"/>
    </location>
</feature>
<feature type="repeat" description="BNR 3">
    <location>
        <begin position="254"/>
        <end position="265"/>
    </location>
</feature>
<feature type="short sequence motif" description="FRIP motif">
    <location>
        <begin position="24"/>
        <end position="27"/>
    </location>
</feature>
<feature type="active site" description="Proton acceptor" evidence="1">
    <location>
        <position position="50"/>
    </location>
</feature>
<feature type="active site" description="Nucleophile" evidence="1">
    <location>
        <position position="369"/>
    </location>
</feature>
<feature type="active site" evidence="4">
    <location>
        <position position="386"/>
    </location>
</feature>
<feature type="binding site" evidence="1">
    <location>
        <position position="25"/>
    </location>
    <ligand>
        <name>substrate</name>
    </ligand>
</feature>
<feature type="binding site" evidence="1">
    <location>
        <position position="45"/>
    </location>
    <ligand>
        <name>substrate</name>
    </ligand>
</feature>
<feature type="binding site" evidence="1">
    <location>
        <position position="179"/>
    </location>
    <ligand>
        <name>substrate</name>
    </ligand>
</feature>
<feature type="binding site" evidence="1">
    <location>
        <position position="181"/>
    </location>
    <ligand>
        <name>substrate</name>
    </ligand>
</feature>
<feature type="binding site" evidence="1">
    <location>
        <position position="223"/>
    </location>
    <ligand>
        <name>substrate</name>
    </ligand>
</feature>
<feature type="binding site" evidence="4">
    <location>
        <position position="243"/>
    </location>
    <ligand>
        <name>substrate</name>
    </ligand>
</feature>
<feature type="binding site" evidence="1">
    <location>
        <position position="339"/>
    </location>
    <ligand>
        <name>substrate</name>
    </ligand>
</feature>
<feature type="modified residue" description="Phosphoserine" evidence="14">
    <location>
        <position position="312"/>
    </location>
</feature>
<name>NEUR3_MOUSE</name>
<comment type="function">
    <text evidence="3 5 6 8">Exo-alpha-sialidase that catalyzes the hydrolytic cleavage of the terminal sialic acid (N-acetylneuraminic acid, Neu5Ac) of a glycan moiety in the catabolism of glycolipids, glycoproteins and oligosacharides. Displays high catalytic efficiency for gangliosides including alpha-(2-&gt;3)-sialylated GD1a and GM3 and alpha-(2-&gt;8)-sialylated GD3 (PubMed:10713120, PubMed:11696012, PubMed:14970224, PubMed:17708748). Plays a role in the regulation of transmembrane signaling through the modulation of ganglioside content of the lipid bilayer and by direct interaction with signaling receptors, such as EGFR. Desialylates EGFR and activates downstream signaling in proliferating cells. Contributes to clathrin-mediated endocytosis by regulating sorting of endocytosed receptors to early and recycling endosomes (By similarity).</text>
</comment>
<comment type="catalytic activity">
    <reaction evidence="5 8">
        <text>Hydrolysis of alpha-(2-&gt;3)-, alpha-(2-&gt;6)-, alpha-(2-&gt;8)- glycosidic linkages of terminal sialic acid residues in oligosaccharides, glycoproteins, glycolipids, colominic acid and synthetic substrates.</text>
        <dbReference type="EC" id="3.2.1.18"/>
    </reaction>
</comment>
<comment type="catalytic activity">
    <reaction evidence="5">
        <text>a ganglioside GD1a + H2O = a ganglioside GM1 + N-acetylneuraminate</text>
        <dbReference type="Rhea" id="RHEA:47832"/>
        <dbReference type="ChEBI" id="CHEBI:15377"/>
        <dbReference type="ChEBI" id="CHEBI:35418"/>
        <dbReference type="ChEBI" id="CHEBI:82637"/>
        <dbReference type="ChEBI" id="CHEBI:82639"/>
    </reaction>
    <physiologicalReaction direction="left-to-right" evidence="10">
        <dbReference type="Rhea" id="RHEA:47833"/>
    </physiologicalReaction>
</comment>
<comment type="catalytic activity">
    <reaction evidence="7 8">
        <text>a ganglioside GD1a (d18:1(4E)) + H2O = a ganglioside GM1 (d18:1(4E)) + N-acetylneuraminate</text>
        <dbReference type="Rhea" id="RHEA:47856"/>
        <dbReference type="ChEBI" id="CHEBI:15377"/>
        <dbReference type="ChEBI" id="CHEBI:35418"/>
        <dbReference type="ChEBI" id="CHEBI:77709"/>
        <dbReference type="ChEBI" id="CHEBI:78445"/>
    </reaction>
    <physiologicalReaction direction="left-to-right" evidence="12 13">
        <dbReference type="Rhea" id="RHEA:47857"/>
    </physiologicalReaction>
</comment>
<comment type="catalytic activity">
    <reaction evidence="3">
        <text>a ganglioside GD1b + H2O = a ganglioside GM1 + N-acetylneuraminate</text>
        <dbReference type="Rhea" id="RHEA:47876"/>
        <dbReference type="ChEBI" id="CHEBI:15377"/>
        <dbReference type="ChEBI" id="CHEBI:35418"/>
        <dbReference type="ChEBI" id="CHEBI:82639"/>
        <dbReference type="ChEBI" id="CHEBI:82939"/>
    </reaction>
    <physiologicalReaction direction="left-to-right" evidence="3">
        <dbReference type="Rhea" id="RHEA:47877"/>
    </physiologicalReaction>
</comment>
<comment type="catalytic activity">
    <reaction evidence="3">
        <text>a ganglioside GD1b (d18:1(4E)) + H2O = a ganglioside GM1 (d18:1(4E)) + N-acetylneuraminate</text>
        <dbReference type="Rhea" id="RHEA:48064"/>
        <dbReference type="ChEBI" id="CHEBI:15377"/>
        <dbReference type="ChEBI" id="CHEBI:35418"/>
        <dbReference type="ChEBI" id="CHEBI:77709"/>
        <dbReference type="ChEBI" id="CHEBI:87785"/>
    </reaction>
    <physiologicalReaction direction="left-to-right" evidence="3">
        <dbReference type="Rhea" id="RHEA:48065"/>
    </physiologicalReaction>
</comment>
<comment type="catalytic activity">
    <reaction evidence="5">
        <text>a ganglioside GD3 + H2O = a ganglioside GM3 + N-acetylneuraminate</text>
        <dbReference type="Rhea" id="RHEA:48120"/>
        <dbReference type="ChEBI" id="CHEBI:15377"/>
        <dbReference type="ChEBI" id="CHEBI:35418"/>
        <dbReference type="ChEBI" id="CHEBI:79210"/>
        <dbReference type="ChEBI" id="CHEBI:79214"/>
    </reaction>
    <physiologicalReaction direction="left-to-right" evidence="10">
        <dbReference type="Rhea" id="RHEA:48121"/>
    </physiologicalReaction>
</comment>
<comment type="catalytic activity">
    <reaction evidence="3">
        <text>a ganglioside GD3 (d18:1(4E)) + H2O = a ganglioside GM3 (d18:1(4E)) + N-acetylneuraminate</text>
        <dbReference type="Rhea" id="RHEA:48124"/>
        <dbReference type="ChEBI" id="CHEBI:15377"/>
        <dbReference type="ChEBI" id="CHEBI:35418"/>
        <dbReference type="ChEBI" id="CHEBI:60065"/>
        <dbReference type="ChEBI" id="CHEBI:78436"/>
    </reaction>
    <physiologicalReaction direction="left-to-right" evidence="3">
        <dbReference type="Rhea" id="RHEA:48125"/>
    </physiologicalReaction>
</comment>
<comment type="catalytic activity">
    <reaction evidence="5">
        <text>a ganglioside GM3 + H2O = a beta-D-galactosyl-(1-&gt;4)-beta-D-glucosyl-(1&lt;-&gt;1)-ceramide + N-acetylneuraminate</text>
        <dbReference type="Rhea" id="RHEA:48136"/>
        <dbReference type="ChEBI" id="CHEBI:15377"/>
        <dbReference type="ChEBI" id="CHEBI:35418"/>
        <dbReference type="ChEBI" id="CHEBI:79208"/>
        <dbReference type="ChEBI" id="CHEBI:79210"/>
    </reaction>
    <physiologicalReaction direction="left-to-right" evidence="10">
        <dbReference type="Rhea" id="RHEA:48137"/>
    </physiologicalReaction>
</comment>
<comment type="catalytic activity">
    <reaction evidence="6">
        <text>a ganglioside GM1 + H2O = a ganglioside GA1 + N-acetylneuraminate</text>
        <dbReference type="Rhea" id="RHEA:47872"/>
        <dbReference type="ChEBI" id="CHEBI:15377"/>
        <dbReference type="ChEBI" id="CHEBI:35418"/>
        <dbReference type="ChEBI" id="CHEBI:82639"/>
        <dbReference type="ChEBI" id="CHEBI:88069"/>
    </reaction>
    <physiologicalReaction direction="left-to-right" evidence="11">
        <dbReference type="Rhea" id="RHEA:47873"/>
    </physiologicalReaction>
</comment>
<comment type="catalytic activity">
    <reaction evidence="11">
        <text>a ganglioside GM1 (d18:1(4E)) + H2O = a ganglioside GA1 (d18:1(4E)) + N-acetylneuraminate</text>
        <dbReference type="Rhea" id="RHEA:48072"/>
        <dbReference type="ChEBI" id="CHEBI:15377"/>
        <dbReference type="ChEBI" id="CHEBI:27938"/>
        <dbReference type="ChEBI" id="CHEBI:35418"/>
        <dbReference type="ChEBI" id="CHEBI:77709"/>
    </reaction>
    <physiologicalReaction direction="left-to-right" evidence="11">
        <dbReference type="Rhea" id="RHEA:48073"/>
    </physiologicalReaction>
</comment>
<comment type="catalytic activity">
    <reaction evidence="6">
        <text>a ganglioside GM2 (d18:1(4E)) + H2O = a ganglioside GA2 (d18:1(4E)) + N-acetylneuraminate</text>
        <dbReference type="Rhea" id="RHEA:48068"/>
        <dbReference type="ChEBI" id="CHEBI:15377"/>
        <dbReference type="ChEBI" id="CHEBI:27731"/>
        <dbReference type="ChEBI" id="CHEBI:35418"/>
        <dbReference type="ChEBI" id="CHEBI:71502"/>
    </reaction>
    <physiologicalReaction direction="left-to-right" evidence="11">
        <dbReference type="Rhea" id="RHEA:48069"/>
    </physiologicalReaction>
</comment>
<comment type="catalytic activity">
    <reaction evidence="3">
        <text>a ganglioside GM3 (d18:1(4E)) + H2O = a beta-D-Gal-(1-&gt;4)-beta-D-Glc-(1&lt;-&gt;1)-Cer(d18:1(4E)) + N-acetylneuraminate</text>
        <dbReference type="Rhea" id="RHEA:47900"/>
        <dbReference type="ChEBI" id="CHEBI:15377"/>
        <dbReference type="ChEBI" id="CHEBI:17950"/>
        <dbReference type="ChEBI" id="CHEBI:35418"/>
        <dbReference type="ChEBI" id="CHEBI:60065"/>
    </reaction>
    <physiologicalReaction direction="left-to-right" evidence="3">
        <dbReference type="Rhea" id="RHEA:47901"/>
    </physiologicalReaction>
</comment>
<comment type="catalytic activity">
    <reaction evidence="2">
        <text>a ganglioside GT1b + H2O = a ganglioside GD1b + N-acetylneuraminate</text>
        <dbReference type="Rhea" id="RHEA:47828"/>
        <dbReference type="ChEBI" id="CHEBI:15377"/>
        <dbReference type="ChEBI" id="CHEBI:35418"/>
        <dbReference type="ChEBI" id="CHEBI:82939"/>
        <dbReference type="ChEBI" id="CHEBI:82940"/>
    </reaction>
    <physiologicalReaction direction="left-to-right" evidence="2">
        <dbReference type="Rhea" id="RHEA:47829"/>
    </physiologicalReaction>
</comment>
<comment type="biophysicochemical properties">
    <phDependence>
        <text evidence="7">Optimum pH is 3.8.</text>
    </phDependence>
</comment>
<comment type="subunit">
    <text evidence="3">Interacts with CAV1; this interaction enhances NEU3 sialidase activity within caveola. Interacts with EGFR; this interaction mediates desialylation of EGFR and enhances downstream signaling.</text>
</comment>
<comment type="subcellular location">
    <subcellularLocation>
        <location evidence="7 8">Cell membrane</location>
        <topology evidence="8">Peripheral membrane protein</topology>
    </subcellularLocation>
    <subcellularLocation>
        <location evidence="3">Membrane</location>
        <location evidence="3">Caveola</location>
    </subcellularLocation>
    <subcellularLocation>
        <location evidence="8">Early endosome membrane</location>
        <topology evidence="8">Peripheral membrane protein</topology>
    </subcellularLocation>
    <subcellularLocation>
        <location evidence="8">Recycling endosome membrane</location>
        <topology evidence="8">Peripheral membrane protein</topology>
    </subcellularLocation>
    <subcellularLocation>
        <location evidence="3">Lysosome membrane</location>
        <topology evidence="3">Peripheral membrane protein</topology>
    </subcellularLocation>
    <text evidence="3 8">Associates with the external leaflet of the plasma membrane (PubMed:17708748). S-acylated NEU3 likely spans the lipid bilayer with a portion of C-terminus exposed to cytosol and the catalytic region facing the extracellular space (By similarity).</text>
</comment>
<comment type="tissue specificity">
    <text evidence="5">Expressed in heart, brain and cerebral cortex.</text>
</comment>
<comment type="PTM">
    <text evidence="3">Palmitoylated; may regulate intracellular trafficking and anchorage to plasma membrane and endomembranes.</text>
</comment>
<comment type="similarity">
    <text evidence="9">Belongs to the glycosyl hydrolase 33 family.</text>
</comment>
<gene>
    <name type="primary">Neu3</name>
</gene>
<sequence length="418" mass="46846">MEEVPPYSLSSTLFQQEEQSGVTYRIPALLYLPPTHTFLAFAEKRTSVRDEDAACLVLRRGLMKGRSVQWGPQRLLMEATLPGHRTMNPCPVWEKNTGRVYLFFICVRGHVTERCQIVWGKNAARLCFLCSEDAGCSWGEVKDLTEEVIGSEVKRWATFAVGPGHGIQLHSGRLIIPAYAYYVSRWFLCFACSVKPHSLMIYSDDFGVTWHHGKFIEPQVTGECQVAEVAGTAGNPVLYCSARTPSRFRAEAFSTDSGGCFQKPTLNPQLHEPRTGCQGSVVSFRPLKMPNTYQDSIGKGAPATQKCPLLDSPLEVEKGAETPSATWLLYSHPTSKRKRINLGIYYNRNPLEVNCWSRPWILNRGPSGYSDLAVVEEQDLVACLFECGEKNEYERIDFCLFSDHEVLSCEDCTSPSSD</sequence>
<accession>Q9JMH7</accession>
<protein>
    <recommendedName>
        <fullName>Sialidase-3</fullName>
        <ecNumber evidence="5 8">3.2.1.18</ecNumber>
    </recommendedName>
    <alternativeName>
        <fullName>Ganglioside sialidase</fullName>
    </alternativeName>
    <alternativeName>
        <fullName>Membrane sialidase</fullName>
    </alternativeName>
    <alternativeName>
        <fullName>N-acetyl-alpha-neuraminidase 3</fullName>
    </alternativeName>
</protein>
<evidence type="ECO:0000250" key="1"/>
<evidence type="ECO:0000250" key="2">
    <source>
        <dbReference type="UniProtKB" id="O97859"/>
    </source>
</evidence>
<evidence type="ECO:0000250" key="3">
    <source>
        <dbReference type="UniProtKB" id="Q9UQ49"/>
    </source>
</evidence>
<evidence type="ECO:0000255" key="4"/>
<evidence type="ECO:0000269" key="5">
    <source>
    </source>
</evidence>
<evidence type="ECO:0000269" key="6">
    <source>
    </source>
</evidence>
<evidence type="ECO:0000269" key="7">
    <source>
    </source>
</evidence>
<evidence type="ECO:0000269" key="8">
    <source>
    </source>
</evidence>
<evidence type="ECO:0000305" key="9"/>
<evidence type="ECO:0000305" key="10">
    <source>
    </source>
</evidence>
<evidence type="ECO:0000305" key="11">
    <source>
    </source>
</evidence>
<evidence type="ECO:0000305" key="12">
    <source>
    </source>
</evidence>
<evidence type="ECO:0000305" key="13">
    <source>
    </source>
</evidence>
<evidence type="ECO:0007744" key="14">
    <source>
    </source>
</evidence>
<reference key="1">
    <citation type="journal article" date="2000" name="J. Biol. Chem.">
        <title>Molecular cloning of mouse ganglioside sialidase and its increased expression in Neuro2a cell differentiation.</title>
        <authorList>
            <person name="Hasegawa T."/>
            <person name="Yamaguchi K."/>
            <person name="Wada T."/>
            <person name="Takeda A."/>
            <person name="Itoyama Y."/>
            <person name="Miyagi T."/>
        </authorList>
    </citation>
    <scope>NUCLEOTIDE SEQUENCE [MRNA]</scope>
    <scope>FUNCTION</scope>
    <scope>CATALYTIC ACTIVITY</scope>
    <scope>TISSUE SPECIFICITY</scope>
    <source>
        <tissue>Brain</tissue>
    </source>
</reference>
<reference key="2">
    <citation type="journal article" date="2001" name="Biochem. J.">
        <title>Degradation of G(M1) and G(M2) by mammalian sialidases.</title>
        <authorList>
            <person name="Li S.C."/>
            <person name="Li Y.T."/>
            <person name="Moriya S."/>
            <person name="Miyagi T."/>
        </authorList>
    </citation>
    <scope>FUNCTION</scope>
    <scope>CATALYTIC ACTIVITY</scope>
</reference>
<reference key="3">
    <citation type="journal article" date="2004" name="J. Biol. Chem.">
        <title>The plasma membrane-associated sialidase MmNEU3 modifies the ganglioside pattern of adjacent cells supporting its involvement in cell-to-cell interactions.</title>
        <authorList>
            <person name="Papini N."/>
            <person name="Anastasia L."/>
            <person name="Tringali C."/>
            <person name="Croci G."/>
            <person name="Bresciani R."/>
            <person name="Yamaguchi K."/>
            <person name="Miyagi T."/>
            <person name="Preti A."/>
            <person name="Prinetti A."/>
            <person name="Prioni S."/>
            <person name="Sonnino S."/>
            <person name="Tettamanti G."/>
            <person name="Venerando B."/>
            <person name="Monti E."/>
        </authorList>
    </citation>
    <scope>FUNCTION</scope>
    <scope>CATALYTIC ACTIVITY</scope>
    <scope>BIOPHYSICOCHEMICAL PROPERTIES</scope>
    <scope>SUBCELLULAR LOCATION</scope>
</reference>
<reference key="4">
    <citation type="journal article" date="2010" name="Cell">
        <title>A tissue-specific atlas of mouse protein phosphorylation and expression.</title>
        <authorList>
            <person name="Huttlin E.L."/>
            <person name="Jedrychowski M.P."/>
            <person name="Elias J.E."/>
            <person name="Goswami T."/>
            <person name="Rad R."/>
            <person name="Beausoleil S.A."/>
            <person name="Villen J."/>
            <person name="Haas W."/>
            <person name="Sowa M.E."/>
            <person name="Gygi S.P."/>
        </authorList>
    </citation>
    <scope>PHOSPHORYLATION [LARGE SCALE ANALYSIS] AT SER-312</scope>
    <scope>IDENTIFICATION BY MASS SPECTROMETRY [LARGE SCALE ANALYSIS]</scope>
    <source>
        <tissue>Brain</tissue>
    </source>
</reference>
<reference key="5">
    <citation type="journal article" date="2007" name="Biochem. J.">
        <title>Sialidase NEU3 is a peripheral membrane protein localized on the cell surface and in endosomal structures.</title>
        <authorList>
            <person name="Zanchetti G."/>
            <person name="Colombi P."/>
            <person name="Manzoni M."/>
            <person name="Anastasia L."/>
            <person name="Caimi L."/>
            <person name="Borsani G."/>
            <person name="Venerando B."/>
            <person name="Tettamanti G."/>
            <person name="Preti A."/>
            <person name="Monti E."/>
            <person name="Bresciani R."/>
        </authorList>
    </citation>
    <scope>FUNCTION</scope>
    <scope>CATALYTIC ACTIVITY</scope>
    <scope>SUBCELLULAR LOCATION</scope>
</reference>
<organism>
    <name type="scientific">Mus musculus</name>
    <name type="common">Mouse</name>
    <dbReference type="NCBI Taxonomy" id="10090"/>
    <lineage>
        <taxon>Eukaryota</taxon>
        <taxon>Metazoa</taxon>
        <taxon>Chordata</taxon>
        <taxon>Craniata</taxon>
        <taxon>Vertebrata</taxon>
        <taxon>Euteleostomi</taxon>
        <taxon>Mammalia</taxon>
        <taxon>Eutheria</taxon>
        <taxon>Euarchontoglires</taxon>
        <taxon>Glires</taxon>
        <taxon>Rodentia</taxon>
        <taxon>Myomorpha</taxon>
        <taxon>Muroidea</taxon>
        <taxon>Muridae</taxon>
        <taxon>Murinae</taxon>
        <taxon>Mus</taxon>
        <taxon>Mus</taxon>
    </lineage>
</organism>
<dbReference type="EC" id="3.2.1.18" evidence="5 8"/>
<dbReference type="EMBL" id="AB026842">
    <property type="protein sequence ID" value="BAA92868.1"/>
    <property type="molecule type" value="mRNA"/>
</dbReference>
<dbReference type="CCDS" id="CCDS21489.1"/>
<dbReference type="RefSeq" id="NP_001405392.1">
    <property type="nucleotide sequence ID" value="NM_001418463.1"/>
</dbReference>
<dbReference type="RefSeq" id="NP_057929.1">
    <property type="nucleotide sequence ID" value="NM_016720.3"/>
</dbReference>
<dbReference type="SMR" id="Q9JMH7"/>
<dbReference type="FunCoup" id="Q9JMH7">
    <property type="interactions" value="497"/>
</dbReference>
<dbReference type="STRING" id="10090.ENSMUSP00000045222"/>
<dbReference type="ChEMBL" id="CHEMBL4106181"/>
<dbReference type="ChEMBL" id="CHEMBL4296071"/>
<dbReference type="SwissLipids" id="SLP:000001371"/>
<dbReference type="CAZy" id="GH33">
    <property type="family name" value="Glycoside Hydrolase Family 33"/>
</dbReference>
<dbReference type="iPTMnet" id="Q9JMH7"/>
<dbReference type="PhosphoSitePlus" id="Q9JMH7"/>
<dbReference type="SwissPalm" id="Q9JMH7"/>
<dbReference type="PaxDb" id="10090-ENSMUSP00000045222"/>
<dbReference type="ProteomicsDB" id="287390"/>
<dbReference type="Antibodypedia" id="56317">
    <property type="antibodies" value="72 antibodies from 15 providers"/>
</dbReference>
<dbReference type="DNASU" id="50877"/>
<dbReference type="Ensembl" id="ENSMUST00000036331.7">
    <property type="protein sequence ID" value="ENSMUSP00000045222.7"/>
    <property type="gene ID" value="ENSMUSG00000035239.8"/>
</dbReference>
<dbReference type="Ensembl" id="ENSMUST00000250002.1">
    <property type="protein sequence ID" value="ENSMUSP00000160085.1"/>
    <property type="gene ID" value="ENSMUSG00000035239.8"/>
</dbReference>
<dbReference type="GeneID" id="50877"/>
<dbReference type="KEGG" id="mmu:50877"/>
<dbReference type="UCSC" id="uc009imc.1">
    <property type="organism name" value="mouse"/>
</dbReference>
<dbReference type="AGR" id="MGI:1355305"/>
<dbReference type="CTD" id="10825"/>
<dbReference type="MGI" id="MGI:1355305">
    <property type="gene designation" value="Neu3"/>
</dbReference>
<dbReference type="VEuPathDB" id="HostDB:ENSMUSG00000035239"/>
<dbReference type="eggNOG" id="ENOG502QSFT">
    <property type="taxonomic scope" value="Eukaryota"/>
</dbReference>
<dbReference type="GeneTree" id="ENSGT00950000182944"/>
<dbReference type="HOGENOM" id="CLU_024620_2_1_1"/>
<dbReference type="InParanoid" id="Q9JMH7"/>
<dbReference type="OMA" id="ECGIKRE"/>
<dbReference type="OrthoDB" id="2739686at2759"/>
<dbReference type="PhylomeDB" id="Q9JMH7"/>
<dbReference type="TreeFam" id="TF331063"/>
<dbReference type="Reactome" id="R-MMU-4085001">
    <property type="pathway name" value="Sialic acid metabolism"/>
</dbReference>
<dbReference type="Reactome" id="R-MMU-9840310">
    <property type="pathway name" value="Glycosphingolipid catabolism"/>
</dbReference>
<dbReference type="BioGRID-ORCS" id="50877">
    <property type="hits" value="3 hits in 79 CRISPR screens"/>
</dbReference>
<dbReference type="PRO" id="PR:Q9JMH7"/>
<dbReference type="Proteomes" id="UP000000589">
    <property type="component" value="Chromosome 7"/>
</dbReference>
<dbReference type="RNAct" id="Q9JMH7">
    <property type="molecule type" value="protein"/>
</dbReference>
<dbReference type="Bgee" id="ENSMUSG00000035239">
    <property type="expression patterns" value="Expressed in cumulus cell and 144 other cell types or tissues"/>
</dbReference>
<dbReference type="ExpressionAtlas" id="Q9JMH7">
    <property type="expression patterns" value="baseline and differential"/>
</dbReference>
<dbReference type="GO" id="GO:0005901">
    <property type="term" value="C:caveola"/>
    <property type="evidence" value="ECO:0007669"/>
    <property type="project" value="UniProtKB-SubCell"/>
</dbReference>
<dbReference type="GO" id="GO:0031901">
    <property type="term" value="C:early endosome membrane"/>
    <property type="evidence" value="ECO:0000314"/>
    <property type="project" value="UniProtKB"/>
</dbReference>
<dbReference type="GO" id="GO:0009897">
    <property type="term" value="C:external side of plasma membrane"/>
    <property type="evidence" value="ECO:0000314"/>
    <property type="project" value="UniProtKB"/>
</dbReference>
<dbReference type="GO" id="GO:0005765">
    <property type="term" value="C:lysosomal membrane"/>
    <property type="evidence" value="ECO:0007669"/>
    <property type="project" value="UniProtKB-SubCell"/>
</dbReference>
<dbReference type="GO" id="GO:0005886">
    <property type="term" value="C:plasma membrane"/>
    <property type="evidence" value="ECO:0000314"/>
    <property type="project" value="UniProtKB"/>
</dbReference>
<dbReference type="GO" id="GO:0055038">
    <property type="term" value="C:recycling endosome membrane"/>
    <property type="evidence" value="ECO:0000314"/>
    <property type="project" value="UniProtKB"/>
</dbReference>
<dbReference type="GO" id="GO:0016997">
    <property type="term" value="F:alpha-sialidase activity"/>
    <property type="evidence" value="ECO:0000266"/>
    <property type="project" value="MGI"/>
</dbReference>
<dbReference type="GO" id="GO:0004308">
    <property type="term" value="F:exo-alpha-sialidase activity"/>
    <property type="evidence" value="ECO:0000314"/>
    <property type="project" value="UniProtKB"/>
</dbReference>
<dbReference type="GO" id="GO:0005975">
    <property type="term" value="P:carbohydrate metabolic process"/>
    <property type="evidence" value="ECO:0000266"/>
    <property type="project" value="MGI"/>
</dbReference>
<dbReference type="GO" id="GO:0006689">
    <property type="term" value="P:ganglioside catabolic process"/>
    <property type="evidence" value="ECO:0000314"/>
    <property type="project" value="UniProtKB"/>
</dbReference>
<dbReference type="CDD" id="cd15482">
    <property type="entry name" value="Sialidase_non-viral"/>
    <property type="match status" value="1"/>
</dbReference>
<dbReference type="Gene3D" id="2.120.10.10">
    <property type="match status" value="1"/>
</dbReference>
<dbReference type="InterPro" id="IPR011040">
    <property type="entry name" value="Sialidase"/>
</dbReference>
<dbReference type="InterPro" id="IPR026856">
    <property type="entry name" value="Sialidase_fam"/>
</dbReference>
<dbReference type="InterPro" id="IPR036278">
    <property type="entry name" value="Sialidase_sf"/>
</dbReference>
<dbReference type="PANTHER" id="PTHR10628">
    <property type="entry name" value="SIALIDASE"/>
    <property type="match status" value="1"/>
</dbReference>
<dbReference type="PANTHER" id="PTHR10628:SF23">
    <property type="entry name" value="SIALIDASE-3"/>
    <property type="match status" value="1"/>
</dbReference>
<dbReference type="Pfam" id="PF13088">
    <property type="entry name" value="BNR_2"/>
    <property type="match status" value="1"/>
</dbReference>
<dbReference type="SUPFAM" id="SSF50939">
    <property type="entry name" value="Sialidases"/>
    <property type="match status" value="1"/>
</dbReference>
<proteinExistence type="evidence at protein level"/>